<evidence type="ECO:0000255" key="1">
    <source>
        <dbReference type="HAMAP-Rule" id="MF_01557"/>
    </source>
</evidence>
<keyword id="KW-0067">ATP-binding</keyword>
<keyword id="KW-0418">Kinase</keyword>
<keyword id="KW-0423">Lactose metabolism</keyword>
<keyword id="KW-0547">Nucleotide-binding</keyword>
<keyword id="KW-1185">Reference proteome</keyword>
<keyword id="KW-0808">Transferase</keyword>
<proteinExistence type="inferred from homology"/>
<name>LACC_STRP1</name>
<organism>
    <name type="scientific">Streptococcus pyogenes serotype M1</name>
    <dbReference type="NCBI Taxonomy" id="301447"/>
    <lineage>
        <taxon>Bacteria</taxon>
        <taxon>Bacillati</taxon>
        <taxon>Bacillota</taxon>
        <taxon>Bacilli</taxon>
        <taxon>Lactobacillales</taxon>
        <taxon>Streptococcaceae</taxon>
        <taxon>Streptococcus</taxon>
    </lineage>
</organism>
<gene>
    <name evidence="1" type="primary">lacC</name>
    <name type="ordered locus">SPy_1921</name>
    <name type="ordered locus">M5005_Spy1636</name>
</gene>
<accession>Q99Y14</accession>
<accession>Q48WM1</accession>
<reference key="1">
    <citation type="journal article" date="2001" name="Proc. Natl. Acad. Sci. U.S.A.">
        <title>Complete genome sequence of an M1 strain of Streptococcus pyogenes.</title>
        <authorList>
            <person name="Ferretti J.J."/>
            <person name="McShan W.M."/>
            <person name="Ajdic D.J."/>
            <person name="Savic D.J."/>
            <person name="Savic G."/>
            <person name="Lyon K."/>
            <person name="Primeaux C."/>
            <person name="Sezate S."/>
            <person name="Suvorov A.N."/>
            <person name="Kenton S."/>
            <person name="Lai H.S."/>
            <person name="Lin S.P."/>
            <person name="Qian Y."/>
            <person name="Jia H.G."/>
            <person name="Najar F.Z."/>
            <person name="Ren Q."/>
            <person name="Zhu H."/>
            <person name="Song L."/>
            <person name="White J."/>
            <person name="Yuan X."/>
            <person name="Clifton S.W."/>
            <person name="Roe B.A."/>
            <person name="McLaughlin R.E."/>
        </authorList>
    </citation>
    <scope>NUCLEOTIDE SEQUENCE [LARGE SCALE GENOMIC DNA]</scope>
    <source>
        <strain>ATCC 700294 / SF370 / Serotype M1</strain>
    </source>
</reference>
<reference key="2">
    <citation type="journal article" date="2005" name="J. Infect. Dis.">
        <title>Evolutionary origin and emergence of a highly successful clone of serotype M1 group A Streptococcus involved multiple horizontal gene transfer events.</title>
        <authorList>
            <person name="Sumby P."/>
            <person name="Porcella S.F."/>
            <person name="Madrigal A.G."/>
            <person name="Barbian K.D."/>
            <person name="Virtaneva K."/>
            <person name="Ricklefs S.M."/>
            <person name="Sturdevant D.E."/>
            <person name="Graham M.R."/>
            <person name="Vuopio-Varkila J."/>
            <person name="Hoe N.P."/>
            <person name="Musser J.M."/>
        </authorList>
    </citation>
    <scope>NUCLEOTIDE SEQUENCE [LARGE SCALE GENOMIC DNA]</scope>
    <source>
        <strain>ATCC BAA-947 / MGAS5005 / Serotype M1</strain>
    </source>
</reference>
<sequence length="309" mass="33490">MILTVTLNPAIDVSYPLDELKCDTVNRVVDVTKTPGGKGLNVSRVLNEFGETVKATGCVGGESGDFIINHLPDSILSRFYKISGDTRTCIAILHEGNQTEILEKGPMLSVDEIDGFTHHFKYLLNDVDVVTLSGSLPAGMPDDYYQKLIKIANLNGKKTVLDCSGNALEAVLKGDSKPTVIKPNLEELSQLLGKEMTKDFDALKEVLQDELFDGIEWIIVSLGADGVFAKHKDTFYNVDIPKIKIVSAVGSGDSTVAGIASGLANDEDDRALLTKANVLGMLNAQEKTTGHVNMANYDKLYQSIKVKEV</sequence>
<dbReference type="EC" id="2.7.1.144" evidence="1"/>
<dbReference type="EMBL" id="AE004092">
    <property type="protein sequence ID" value="AAK34624.1"/>
    <property type="molecule type" value="Genomic_DNA"/>
</dbReference>
<dbReference type="EMBL" id="CP000017">
    <property type="protein sequence ID" value="AAZ52254.1"/>
    <property type="molecule type" value="Genomic_DNA"/>
</dbReference>
<dbReference type="RefSeq" id="NP_269903.1">
    <property type="nucleotide sequence ID" value="NC_002737.2"/>
</dbReference>
<dbReference type="SMR" id="Q99Y14"/>
<dbReference type="PaxDb" id="1314-HKU360_01759"/>
<dbReference type="KEGG" id="spy:SPy_1921"/>
<dbReference type="KEGG" id="spz:M5005_Spy1636"/>
<dbReference type="PATRIC" id="fig|160490.10.peg.1669"/>
<dbReference type="HOGENOM" id="CLU_050013_5_0_9"/>
<dbReference type="OMA" id="GHVNMAH"/>
<dbReference type="UniPathway" id="UPA00704">
    <property type="reaction ID" value="UER00715"/>
</dbReference>
<dbReference type="Proteomes" id="UP000000750">
    <property type="component" value="Chromosome"/>
</dbReference>
<dbReference type="GO" id="GO:0005829">
    <property type="term" value="C:cytosol"/>
    <property type="evidence" value="ECO:0007669"/>
    <property type="project" value="TreeGrafter"/>
</dbReference>
<dbReference type="GO" id="GO:0005524">
    <property type="term" value="F:ATP binding"/>
    <property type="evidence" value="ECO:0007669"/>
    <property type="project" value="UniProtKB-KW"/>
</dbReference>
<dbReference type="GO" id="GO:0008443">
    <property type="term" value="F:phosphofructokinase activity"/>
    <property type="evidence" value="ECO:0007669"/>
    <property type="project" value="TreeGrafter"/>
</dbReference>
<dbReference type="GO" id="GO:0009024">
    <property type="term" value="F:tagatose-6-phosphate kinase activity"/>
    <property type="evidence" value="ECO:0007669"/>
    <property type="project" value="UniProtKB-UniRule"/>
</dbReference>
<dbReference type="GO" id="GO:2001059">
    <property type="term" value="P:D-tagatose 6-phosphate catabolic process"/>
    <property type="evidence" value="ECO:0007669"/>
    <property type="project" value="UniProtKB-UniRule"/>
</dbReference>
<dbReference type="GO" id="GO:0019512">
    <property type="term" value="P:lactose catabolic process via tagatose-6-phosphate"/>
    <property type="evidence" value="ECO:0007669"/>
    <property type="project" value="InterPro"/>
</dbReference>
<dbReference type="CDD" id="cd01164">
    <property type="entry name" value="FruK_PfkB_like"/>
    <property type="match status" value="1"/>
</dbReference>
<dbReference type="FunFam" id="3.40.1190.20:FF:000001">
    <property type="entry name" value="Phosphofructokinase"/>
    <property type="match status" value="1"/>
</dbReference>
<dbReference type="Gene3D" id="3.40.1190.20">
    <property type="match status" value="1"/>
</dbReference>
<dbReference type="HAMAP" id="MF_01557">
    <property type="entry name" value="LacC"/>
    <property type="match status" value="1"/>
</dbReference>
<dbReference type="InterPro" id="IPR002173">
    <property type="entry name" value="Carboh/pur_kinase_PfkB_CS"/>
</dbReference>
<dbReference type="InterPro" id="IPR005926">
    <property type="entry name" value="LacC"/>
</dbReference>
<dbReference type="InterPro" id="IPR011611">
    <property type="entry name" value="PfkB_dom"/>
</dbReference>
<dbReference type="InterPro" id="IPR029056">
    <property type="entry name" value="Ribokinase-like"/>
</dbReference>
<dbReference type="InterPro" id="IPR017583">
    <property type="entry name" value="Tagatose/fructose_Pkinase"/>
</dbReference>
<dbReference type="NCBIfam" id="TIGR03168">
    <property type="entry name" value="1-PFK"/>
    <property type="match status" value="1"/>
</dbReference>
<dbReference type="NCBIfam" id="TIGR01231">
    <property type="entry name" value="lacC"/>
    <property type="match status" value="1"/>
</dbReference>
<dbReference type="NCBIfam" id="NF010033">
    <property type="entry name" value="PRK13508.1"/>
    <property type="match status" value="1"/>
</dbReference>
<dbReference type="PANTHER" id="PTHR46566:SF5">
    <property type="entry name" value="1-PHOSPHOFRUCTOKINASE"/>
    <property type="match status" value="1"/>
</dbReference>
<dbReference type="PANTHER" id="PTHR46566">
    <property type="entry name" value="1-PHOSPHOFRUCTOKINASE-RELATED"/>
    <property type="match status" value="1"/>
</dbReference>
<dbReference type="Pfam" id="PF00294">
    <property type="entry name" value="PfkB"/>
    <property type="match status" value="1"/>
</dbReference>
<dbReference type="PIRSF" id="PIRSF000535">
    <property type="entry name" value="1PFK/6PFK/LacC"/>
    <property type="match status" value="1"/>
</dbReference>
<dbReference type="SUPFAM" id="SSF53613">
    <property type="entry name" value="Ribokinase-like"/>
    <property type="match status" value="1"/>
</dbReference>
<dbReference type="PROSITE" id="PS00583">
    <property type="entry name" value="PFKB_KINASES_1"/>
    <property type="match status" value="1"/>
</dbReference>
<feature type="chain" id="PRO_0000203933" description="Tagatose-6-phosphate kinase">
    <location>
        <begin position="1"/>
        <end position="309"/>
    </location>
</feature>
<comment type="catalytic activity">
    <reaction evidence="1">
        <text>D-tagatofuranose 6-phosphate + ATP = D-tagatofuranose 1,6-bisphosphate + ADP + H(+)</text>
        <dbReference type="Rhea" id="RHEA:12420"/>
        <dbReference type="ChEBI" id="CHEBI:15378"/>
        <dbReference type="ChEBI" id="CHEBI:30616"/>
        <dbReference type="ChEBI" id="CHEBI:58694"/>
        <dbReference type="ChEBI" id="CHEBI:58695"/>
        <dbReference type="ChEBI" id="CHEBI:456216"/>
        <dbReference type="EC" id="2.7.1.144"/>
    </reaction>
</comment>
<comment type="pathway">
    <text evidence="1">Carbohydrate metabolism; D-tagatose 6-phosphate degradation; D-glyceraldehyde 3-phosphate and glycerone phosphate from D-tagatose 6-phosphate: step 1/2.</text>
</comment>
<comment type="similarity">
    <text evidence="1">Belongs to the carbohydrate kinase PfkB family. LacC subfamily.</text>
</comment>
<protein>
    <recommendedName>
        <fullName evidence="1">Tagatose-6-phosphate kinase</fullName>
        <ecNumber evidence="1">2.7.1.144</ecNumber>
    </recommendedName>
    <alternativeName>
        <fullName evidence="1">Phosphotagatokinase</fullName>
    </alternativeName>
</protein>